<evidence type="ECO:0000255" key="1">
    <source>
        <dbReference type="HAMAP-Rule" id="MF_00023"/>
    </source>
</evidence>
<evidence type="ECO:0000256" key="2">
    <source>
        <dbReference type="SAM" id="MobiDB-lite"/>
    </source>
</evidence>
<protein>
    <recommendedName>
        <fullName evidence="1">SsrA-binding protein</fullName>
    </recommendedName>
    <alternativeName>
        <fullName evidence="1">Small protein B</fullName>
    </alternativeName>
</protein>
<organism>
    <name type="scientific">Xanthomonas oryzae pv. oryzae (strain MAFF 311018)</name>
    <dbReference type="NCBI Taxonomy" id="342109"/>
    <lineage>
        <taxon>Bacteria</taxon>
        <taxon>Pseudomonadati</taxon>
        <taxon>Pseudomonadota</taxon>
        <taxon>Gammaproteobacteria</taxon>
        <taxon>Lysobacterales</taxon>
        <taxon>Lysobacteraceae</taxon>
        <taxon>Xanthomonas</taxon>
    </lineage>
</organism>
<feature type="chain" id="PRO_1000002186" description="SsrA-binding protein">
    <location>
        <begin position="1"/>
        <end position="167"/>
    </location>
</feature>
<feature type="region of interest" description="Disordered" evidence="2">
    <location>
        <begin position="139"/>
        <end position="167"/>
    </location>
</feature>
<feature type="compositionally biased region" description="Basic and acidic residues" evidence="2">
    <location>
        <begin position="139"/>
        <end position="158"/>
    </location>
</feature>
<keyword id="KW-0963">Cytoplasm</keyword>
<keyword id="KW-0694">RNA-binding</keyword>
<reference key="1">
    <citation type="journal article" date="2005" name="Jpn. Agric. Res. Q.">
        <title>Genome sequence of Xanthomonas oryzae pv. oryzae suggests contribution of large numbers of effector genes and insertion sequences to its race diversity.</title>
        <authorList>
            <person name="Ochiai H."/>
            <person name="Inoue Y."/>
            <person name="Takeya M."/>
            <person name="Sasaki A."/>
            <person name="Kaku H."/>
        </authorList>
    </citation>
    <scope>NUCLEOTIDE SEQUENCE [LARGE SCALE GENOMIC DNA]</scope>
    <source>
        <strain>MAFF 311018</strain>
    </source>
</reference>
<proteinExistence type="inferred from homology"/>
<name>SSRP_XANOM</name>
<comment type="function">
    <text evidence="1">Required for rescue of stalled ribosomes mediated by trans-translation. Binds to transfer-messenger RNA (tmRNA), required for stable association of tmRNA with ribosomes. tmRNA and SmpB together mimic tRNA shape, replacing the anticodon stem-loop with SmpB. tmRNA is encoded by the ssrA gene; the 2 termini fold to resemble tRNA(Ala) and it encodes a 'tag peptide', a short internal open reading frame. During trans-translation Ala-aminoacylated tmRNA acts like a tRNA, entering the A-site of stalled ribosomes, displacing the stalled mRNA. The ribosome then switches to translate the ORF on the tmRNA; the nascent peptide is terminated with the 'tag peptide' encoded by the tmRNA and targeted for degradation. The ribosome is freed to recommence translation, which seems to be the essential function of trans-translation.</text>
</comment>
<comment type="subcellular location">
    <subcellularLocation>
        <location evidence="1">Cytoplasm</location>
    </subcellularLocation>
    <text evidence="1">The tmRNA-SmpB complex associates with stalled 70S ribosomes.</text>
</comment>
<comment type="similarity">
    <text evidence="1">Belongs to the SmpB family.</text>
</comment>
<accession>Q2P468</accession>
<sequence length="167" mass="19293">MNKKPTKDKANGAKATKTIALNKRARHEYHLEERYEAGLALQGWEIKAIRAGRANIVDGYAYVRSGEIYLIGAQITPLIQASTHTVPVERRDRKLLLHRAEIDKVLTRVEREGYTLVPTALYWSSNKVKLEIALAKGKQNHDKRDAAKERDWQRDKQRVMRRHNRDA</sequence>
<gene>
    <name evidence="1" type="primary">smpB</name>
    <name type="ordered locus">XOO1904</name>
</gene>
<dbReference type="EMBL" id="AP008229">
    <property type="protein sequence ID" value="BAE68659.1"/>
    <property type="molecule type" value="Genomic_DNA"/>
</dbReference>
<dbReference type="RefSeq" id="WP_011408348.1">
    <property type="nucleotide sequence ID" value="NC_007705.1"/>
</dbReference>
<dbReference type="SMR" id="Q2P468"/>
<dbReference type="KEGG" id="xom:XOO1904"/>
<dbReference type="HOGENOM" id="CLU_108953_3_0_6"/>
<dbReference type="GO" id="GO:0005829">
    <property type="term" value="C:cytosol"/>
    <property type="evidence" value="ECO:0007669"/>
    <property type="project" value="TreeGrafter"/>
</dbReference>
<dbReference type="GO" id="GO:0003723">
    <property type="term" value="F:RNA binding"/>
    <property type="evidence" value="ECO:0007669"/>
    <property type="project" value="UniProtKB-UniRule"/>
</dbReference>
<dbReference type="GO" id="GO:0070929">
    <property type="term" value="P:trans-translation"/>
    <property type="evidence" value="ECO:0007669"/>
    <property type="project" value="UniProtKB-UniRule"/>
</dbReference>
<dbReference type="CDD" id="cd09294">
    <property type="entry name" value="SmpB"/>
    <property type="match status" value="1"/>
</dbReference>
<dbReference type="Gene3D" id="2.40.280.10">
    <property type="match status" value="1"/>
</dbReference>
<dbReference type="HAMAP" id="MF_00023">
    <property type="entry name" value="SmpB"/>
    <property type="match status" value="1"/>
</dbReference>
<dbReference type="InterPro" id="IPR023620">
    <property type="entry name" value="SmpB"/>
</dbReference>
<dbReference type="InterPro" id="IPR000037">
    <property type="entry name" value="SsrA-bd_prot"/>
</dbReference>
<dbReference type="InterPro" id="IPR020081">
    <property type="entry name" value="SsrA-bd_prot_CS"/>
</dbReference>
<dbReference type="NCBIfam" id="NF003843">
    <property type="entry name" value="PRK05422.1"/>
    <property type="match status" value="1"/>
</dbReference>
<dbReference type="NCBIfam" id="TIGR00086">
    <property type="entry name" value="smpB"/>
    <property type="match status" value="1"/>
</dbReference>
<dbReference type="PANTHER" id="PTHR30308:SF2">
    <property type="entry name" value="SSRA-BINDING PROTEIN"/>
    <property type="match status" value="1"/>
</dbReference>
<dbReference type="PANTHER" id="PTHR30308">
    <property type="entry name" value="TMRNA-BINDING COMPONENT OF TRANS-TRANSLATION TAGGING COMPLEX"/>
    <property type="match status" value="1"/>
</dbReference>
<dbReference type="Pfam" id="PF01668">
    <property type="entry name" value="SmpB"/>
    <property type="match status" value="1"/>
</dbReference>
<dbReference type="SUPFAM" id="SSF74982">
    <property type="entry name" value="Small protein B (SmpB)"/>
    <property type="match status" value="1"/>
</dbReference>
<dbReference type="PROSITE" id="PS01317">
    <property type="entry name" value="SSRP"/>
    <property type="match status" value="1"/>
</dbReference>